<sequence length="54" mass="5758">VATVDCSGYPKPACTMEYMPLCGSDNKTYGNKCNFCNAVVDSNGTLTLSHFGEC</sequence>
<organism>
    <name type="scientific">Alopochen aegyptiaca</name>
    <name type="common">Egyptian goose</name>
    <name type="synonym">Anas aegyptiaca</name>
    <dbReference type="NCBI Taxonomy" id="30382"/>
    <lineage>
        <taxon>Eukaryota</taxon>
        <taxon>Metazoa</taxon>
        <taxon>Chordata</taxon>
        <taxon>Craniata</taxon>
        <taxon>Vertebrata</taxon>
        <taxon>Euteleostomi</taxon>
        <taxon>Archelosauria</taxon>
        <taxon>Archosauria</taxon>
        <taxon>Dinosauria</taxon>
        <taxon>Saurischia</taxon>
        <taxon>Theropoda</taxon>
        <taxon>Coelurosauria</taxon>
        <taxon>Aves</taxon>
        <taxon>Neognathae</taxon>
        <taxon>Galloanserae</taxon>
        <taxon>Anseriformes</taxon>
        <taxon>Anatidae</taxon>
        <taxon>Tadorninae</taxon>
        <taxon>Alopochen</taxon>
    </lineage>
</organism>
<proteinExistence type="evidence at protein level"/>
<reference key="1">
    <citation type="journal article" date="1993" name="J. Protein Chem.">
        <title>Amino acid sequences of ovomucoid third domains from 27 additional species of birds.</title>
        <authorList>
            <person name="Apostol I."/>
            <person name="Giletto A."/>
            <person name="Komiyama T."/>
            <person name="Zhang W."/>
            <person name="Laskowski M. Jr."/>
        </authorList>
    </citation>
    <scope>PROTEIN SEQUENCE</scope>
</reference>
<protein>
    <recommendedName>
        <fullName>Ovomucoid</fullName>
    </recommendedName>
</protein>
<feature type="chain" id="PRO_0000073054" description="Ovomucoid">
    <location>
        <begin position="1" status="less than"/>
        <end position="54" status="greater than"/>
    </location>
</feature>
<feature type="domain" description="Kazal-like" evidence="1">
    <location>
        <begin position="4"/>
        <end position="54"/>
    </location>
</feature>
<feature type="site" description="Reactive bond 3">
    <location>
        <begin position="16"/>
        <end position="17"/>
    </location>
</feature>
<feature type="glycosylation site" description="N-linked (GlcNAc...) asparagine">
    <location>
        <position position="43"/>
    </location>
</feature>
<feature type="disulfide bond">
    <location>
        <begin position="6"/>
        <end position="36"/>
    </location>
</feature>
<feature type="disulfide bond">
    <location>
        <begin position="14"/>
        <end position="33"/>
    </location>
</feature>
<feature type="disulfide bond">
    <location>
        <begin position="22"/>
        <end position="54"/>
    </location>
</feature>
<feature type="non-terminal residue">
    <location>
        <position position="1"/>
    </location>
</feature>
<feature type="non-terminal residue">
    <location>
        <position position="54"/>
    </location>
</feature>
<dbReference type="SMR" id="P68148"/>
<dbReference type="GO" id="GO:0005576">
    <property type="term" value="C:extracellular region"/>
    <property type="evidence" value="ECO:0007669"/>
    <property type="project" value="UniProtKB-SubCell"/>
</dbReference>
<dbReference type="GO" id="GO:0004867">
    <property type="term" value="F:serine-type endopeptidase inhibitor activity"/>
    <property type="evidence" value="ECO:0007669"/>
    <property type="project" value="UniProtKB-KW"/>
</dbReference>
<dbReference type="CDD" id="cd00104">
    <property type="entry name" value="KAZAL_FS"/>
    <property type="match status" value="1"/>
</dbReference>
<dbReference type="FunFam" id="3.30.60.30:FF:000037">
    <property type="entry name" value="Ovomucoid"/>
    <property type="match status" value="1"/>
</dbReference>
<dbReference type="Gene3D" id="3.30.60.30">
    <property type="match status" value="1"/>
</dbReference>
<dbReference type="InterPro" id="IPR051597">
    <property type="entry name" value="Bifunctional_prot_inhibitor"/>
</dbReference>
<dbReference type="InterPro" id="IPR002350">
    <property type="entry name" value="Kazal_dom"/>
</dbReference>
<dbReference type="InterPro" id="IPR036058">
    <property type="entry name" value="Kazal_dom_sf"/>
</dbReference>
<dbReference type="InterPro" id="IPR001239">
    <property type="entry name" value="Prot_inh_Kazal-m"/>
</dbReference>
<dbReference type="PANTHER" id="PTHR47729:SF1">
    <property type="entry name" value="OVOMUCOID-LIKE-RELATED"/>
    <property type="match status" value="1"/>
</dbReference>
<dbReference type="PANTHER" id="PTHR47729">
    <property type="entry name" value="SERINE PEPTIDASE INHIBITOR, KAZAL TYPE 2, TANDEM DUPLICATE 1-RELATED"/>
    <property type="match status" value="1"/>
</dbReference>
<dbReference type="Pfam" id="PF00050">
    <property type="entry name" value="Kazal_1"/>
    <property type="match status" value="1"/>
</dbReference>
<dbReference type="PRINTS" id="PR00290">
    <property type="entry name" value="KAZALINHBTR"/>
</dbReference>
<dbReference type="SMART" id="SM00280">
    <property type="entry name" value="KAZAL"/>
    <property type="match status" value="1"/>
</dbReference>
<dbReference type="SUPFAM" id="SSF100895">
    <property type="entry name" value="Kazal-type serine protease inhibitors"/>
    <property type="match status" value="1"/>
</dbReference>
<dbReference type="PROSITE" id="PS00282">
    <property type="entry name" value="KAZAL_1"/>
    <property type="match status" value="1"/>
</dbReference>
<dbReference type="PROSITE" id="PS51465">
    <property type="entry name" value="KAZAL_2"/>
    <property type="match status" value="1"/>
</dbReference>
<comment type="subcellular location">
    <subcellularLocation>
        <location>Secreted</location>
    </subcellularLocation>
</comment>
<comment type="domain">
    <text>Avian ovomucoid consists of three homologous, tandem Kazal family inhibitory domains.</text>
</comment>
<keyword id="KW-0903">Direct protein sequencing</keyword>
<keyword id="KW-1015">Disulfide bond</keyword>
<keyword id="KW-0325">Glycoprotein</keyword>
<keyword id="KW-0646">Protease inhibitor</keyword>
<keyword id="KW-0677">Repeat</keyword>
<keyword id="KW-0964">Secreted</keyword>
<keyword id="KW-0722">Serine protease inhibitor</keyword>
<name>IOVO_ALOAE</name>
<accession>P68148</accession>
<accession>P05576</accession>
<evidence type="ECO:0000255" key="1">
    <source>
        <dbReference type="PROSITE-ProRule" id="PRU00798"/>
    </source>
</evidence>